<evidence type="ECO:0000255" key="1">
    <source>
        <dbReference type="HAMAP-Rule" id="MF_00454"/>
    </source>
</evidence>
<accession>Q82U09</accession>
<organism>
    <name type="scientific">Nitrosomonas europaea (strain ATCC 19718 / CIP 103999 / KCTC 2705 / NBRC 14298)</name>
    <dbReference type="NCBI Taxonomy" id="228410"/>
    <lineage>
        <taxon>Bacteria</taxon>
        <taxon>Pseudomonadati</taxon>
        <taxon>Pseudomonadota</taxon>
        <taxon>Betaproteobacteria</taxon>
        <taxon>Nitrosomonadales</taxon>
        <taxon>Nitrosomonadaceae</taxon>
        <taxon>Nitrosomonas</taxon>
    </lineage>
</organism>
<dbReference type="EMBL" id="AL954747">
    <property type="protein sequence ID" value="CAD85615.1"/>
    <property type="molecule type" value="Genomic_DNA"/>
</dbReference>
<dbReference type="RefSeq" id="WP_011112258.1">
    <property type="nucleotide sequence ID" value="NC_004757.1"/>
</dbReference>
<dbReference type="SMR" id="Q82U09"/>
<dbReference type="STRING" id="228410.NE1704"/>
<dbReference type="GeneID" id="87104864"/>
<dbReference type="KEGG" id="neu:NE1704"/>
<dbReference type="eggNOG" id="COG0239">
    <property type="taxonomic scope" value="Bacteria"/>
</dbReference>
<dbReference type="HOGENOM" id="CLU_114342_3_3_4"/>
<dbReference type="OrthoDB" id="9806299at2"/>
<dbReference type="PhylomeDB" id="Q82U09"/>
<dbReference type="Proteomes" id="UP000001416">
    <property type="component" value="Chromosome"/>
</dbReference>
<dbReference type="GO" id="GO:0005886">
    <property type="term" value="C:plasma membrane"/>
    <property type="evidence" value="ECO:0007669"/>
    <property type="project" value="UniProtKB-SubCell"/>
</dbReference>
<dbReference type="GO" id="GO:0062054">
    <property type="term" value="F:fluoride channel activity"/>
    <property type="evidence" value="ECO:0007669"/>
    <property type="project" value="UniProtKB-UniRule"/>
</dbReference>
<dbReference type="GO" id="GO:0046872">
    <property type="term" value="F:metal ion binding"/>
    <property type="evidence" value="ECO:0007669"/>
    <property type="project" value="UniProtKB-KW"/>
</dbReference>
<dbReference type="GO" id="GO:0140114">
    <property type="term" value="P:cellular detoxification of fluoride"/>
    <property type="evidence" value="ECO:0007669"/>
    <property type="project" value="UniProtKB-UniRule"/>
</dbReference>
<dbReference type="HAMAP" id="MF_00454">
    <property type="entry name" value="FluC"/>
    <property type="match status" value="1"/>
</dbReference>
<dbReference type="InterPro" id="IPR003691">
    <property type="entry name" value="FluC"/>
</dbReference>
<dbReference type="NCBIfam" id="TIGR00494">
    <property type="entry name" value="crcB"/>
    <property type="match status" value="1"/>
</dbReference>
<dbReference type="NCBIfam" id="NF010792">
    <property type="entry name" value="PRK14196.1"/>
    <property type="match status" value="1"/>
</dbReference>
<dbReference type="PANTHER" id="PTHR28259">
    <property type="entry name" value="FLUORIDE EXPORT PROTEIN 1-RELATED"/>
    <property type="match status" value="1"/>
</dbReference>
<dbReference type="PANTHER" id="PTHR28259:SF1">
    <property type="entry name" value="FLUORIDE EXPORT PROTEIN 1-RELATED"/>
    <property type="match status" value="1"/>
</dbReference>
<dbReference type="Pfam" id="PF02537">
    <property type="entry name" value="CRCB"/>
    <property type="match status" value="1"/>
</dbReference>
<feature type="chain" id="PRO_0000110142" description="Fluoride-specific ion channel FluC">
    <location>
        <begin position="1"/>
        <end position="127"/>
    </location>
</feature>
<feature type="transmembrane region" description="Helical" evidence="1">
    <location>
        <begin position="4"/>
        <end position="24"/>
    </location>
</feature>
<feature type="transmembrane region" description="Helical" evidence="1">
    <location>
        <begin position="36"/>
        <end position="56"/>
    </location>
</feature>
<feature type="transmembrane region" description="Helical" evidence="1">
    <location>
        <begin position="68"/>
        <end position="88"/>
    </location>
</feature>
<feature type="transmembrane region" description="Helical" evidence="1">
    <location>
        <begin position="98"/>
        <end position="118"/>
    </location>
</feature>
<feature type="binding site" evidence="1">
    <location>
        <position position="75"/>
    </location>
    <ligand>
        <name>Na(+)</name>
        <dbReference type="ChEBI" id="CHEBI:29101"/>
        <note>structural</note>
    </ligand>
</feature>
<feature type="binding site" evidence="1">
    <location>
        <position position="78"/>
    </location>
    <ligand>
        <name>Na(+)</name>
        <dbReference type="ChEBI" id="CHEBI:29101"/>
        <note>structural</note>
    </ligand>
</feature>
<reference key="1">
    <citation type="journal article" date="2003" name="J. Bacteriol.">
        <title>Complete genome sequence of the ammonia-oxidizing bacterium and obligate chemolithoautotroph Nitrosomonas europaea.</title>
        <authorList>
            <person name="Chain P."/>
            <person name="Lamerdin J.E."/>
            <person name="Larimer F.W."/>
            <person name="Regala W."/>
            <person name="Lao V."/>
            <person name="Land M.L."/>
            <person name="Hauser L."/>
            <person name="Hooper A.B."/>
            <person name="Klotz M.G."/>
            <person name="Norton J."/>
            <person name="Sayavedra-Soto L.A."/>
            <person name="Arciero D.M."/>
            <person name="Hommes N.G."/>
            <person name="Whittaker M.M."/>
            <person name="Arp D.J."/>
        </authorList>
    </citation>
    <scope>NUCLEOTIDE SEQUENCE [LARGE SCALE GENOMIC DNA]</scope>
    <source>
        <strain>ATCC 19718 / CIP 103999 / KCTC 2705 / NBRC 14298</strain>
    </source>
</reference>
<name>FLUC_NITEU</name>
<sequence>MWKPILAIALGSTLGGLLRWGLGLKLNNLFPDVPPGTLVANLIAGYVVGVAIAFFAHMPNLSPEWRLLVITGFCGGLSTFSTFSAEIVSLLQRGLYAWAMSAIAVHVAGSLIMTLAGIATVTWFKSS</sequence>
<comment type="function">
    <text evidence="1">Fluoride-specific ion channel. Important for reducing fluoride concentration in the cell, thus reducing its toxicity.</text>
</comment>
<comment type="catalytic activity">
    <reaction evidence="1">
        <text>fluoride(in) = fluoride(out)</text>
        <dbReference type="Rhea" id="RHEA:76159"/>
        <dbReference type="ChEBI" id="CHEBI:17051"/>
    </reaction>
    <physiologicalReaction direction="left-to-right" evidence="1">
        <dbReference type="Rhea" id="RHEA:76160"/>
    </physiologicalReaction>
</comment>
<comment type="activity regulation">
    <text evidence="1">Na(+) is not transported, but it plays an essential structural role and its presence is essential for fluoride channel function.</text>
</comment>
<comment type="subcellular location">
    <subcellularLocation>
        <location evidence="1">Cell inner membrane</location>
        <topology evidence="1">Multi-pass membrane protein</topology>
    </subcellularLocation>
</comment>
<comment type="similarity">
    <text evidence="1">Belongs to the fluoride channel Fluc/FEX (TC 1.A.43) family.</text>
</comment>
<protein>
    <recommendedName>
        <fullName evidence="1">Fluoride-specific ion channel FluC</fullName>
    </recommendedName>
</protein>
<gene>
    <name evidence="1" type="primary">fluC</name>
    <name evidence="1" type="synonym">crcB</name>
    <name type="ordered locus">NE1704</name>
</gene>
<proteinExistence type="inferred from homology"/>
<keyword id="KW-0997">Cell inner membrane</keyword>
<keyword id="KW-1003">Cell membrane</keyword>
<keyword id="KW-0407">Ion channel</keyword>
<keyword id="KW-0406">Ion transport</keyword>
<keyword id="KW-0472">Membrane</keyword>
<keyword id="KW-0479">Metal-binding</keyword>
<keyword id="KW-1185">Reference proteome</keyword>
<keyword id="KW-0915">Sodium</keyword>
<keyword id="KW-0812">Transmembrane</keyword>
<keyword id="KW-1133">Transmembrane helix</keyword>
<keyword id="KW-0813">Transport</keyword>